<dbReference type="EC" id="4.2.1.11" evidence="1"/>
<dbReference type="EMBL" id="AP010918">
    <property type="protein sequence ID" value="BAH25343.1"/>
    <property type="molecule type" value="Genomic_DNA"/>
</dbReference>
<dbReference type="RefSeq" id="WP_003405290.1">
    <property type="nucleotide sequence ID" value="NZ_CP014566.1"/>
</dbReference>
<dbReference type="SMR" id="C1AM14"/>
<dbReference type="GeneID" id="45424995"/>
<dbReference type="KEGG" id="mbt:JTY_1052"/>
<dbReference type="HOGENOM" id="CLU_031223_0_1_11"/>
<dbReference type="UniPathway" id="UPA00109">
    <property type="reaction ID" value="UER00187"/>
</dbReference>
<dbReference type="GO" id="GO:0009986">
    <property type="term" value="C:cell surface"/>
    <property type="evidence" value="ECO:0007669"/>
    <property type="project" value="UniProtKB-SubCell"/>
</dbReference>
<dbReference type="GO" id="GO:0005576">
    <property type="term" value="C:extracellular region"/>
    <property type="evidence" value="ECO:0007669"/>
    <property type="project" value="UniProtKB-SubCell"/>
</dbReference>
<dbReference type="GO" id="GO:0000015">
    <property type="term" value="C:phosphopyruvate hydratase complex"/>
    <property type="evidence" value="ECO:0007669"/>
    <property type="project" value="InterPro"/>
</dbReference>
<dbReference type="GO" id="GO:0000287">
    <property type="term" value="F:magnesium ion binding"/>
    <property type="evidence" value="ECO:0007669"/>
    <property type="project" value="UniProtKB-UniRule"/>
</dbReference>
<dbReference type="GO" id="GO:0004634">
    <property type="term" value="F:phosphopyruvate hydratase activity"/>
    <property type="evidence" value="ECO:0007669"/>
    <property type="project" value="UniProtKB-UniRule"/>
</dbReference>
<dbReference type="GO" id="GO:0006096">
    <property type="term" value="P:glycolytic process"/>
    <property type="evidence" value="ECO:0007669"/>
    <property type="project" value="UniProtKB-UniRule"/>
</dbReference>
<dbReference type="CDD" id="cd03313">
    <property type="entry name" value="enolase"/>
    <property type="match status" value="1"/>
</dbReference>
<dbReference type="FunFam" id="3.20.20.120:FF:000001">
    <property type="entry name" value="Enolase"/>
    <property type="match status" value="1"/>
</dbReference>
<dbReference type="FunFam" id="3.30.390.10:FF:000001">
    <property type="entry name" value="Enolase"/>
    <property type="match status" value="1"/>
</dbReference>
<dbReference type="Gene3D" id="3.20.20.120">
    <property type="entry name" value="Enolase-like C-terminal domain"/>
    <property type="match status" value="1"/>
</dbReference>
<dbReference type="Gene3D" id="3.30.390.10">
    <property type="entry name" value="Enolase-like, N-terminal domain"/>
    <property type="match status" value="1"/>
</dbReference>
<dbReference type="HAMAP" id="MF_00318">
    <property type="entry name" value="Enolase"/>
    <property type="match status" value="1"/>
</dbReference>
<dbReference type="InterPro" id="IPR000941">
    <property type="entry name" value="Enolase"/>
</dbReference>
<dbReference type="InterPro" id="IPR036849">
    <property type="entry name" value="Enolase-like_C_sf"/>
</dbReference>
<dbReference type="InterPro" id="IPR029017">
    <property type="entry name" value="Enolase-like_N"/>
</dbReference>
<dbReference type="InterPro" id="IPR020810">
    <property type="entry name" value="Enolase_C"/>
</dbReference>
<dbReference type="InterPro" id="IPR020809">
    <property type="entry name" value="Enolase_CS"/>
</dbReference>
<dbReference type="InterPro" id="IPR020811">
    <property type="entry name" value="Enolase_N"/>
</dbReference>
<dbReference type="NCBIfam" id="TIGR01060">
    <property type="entry name" value="eno"/>
    <property type="match status" value="1"/>
</dbReference>
<dbReference type="PANTHER" id="PTHR11902">
    <property type="entry name" value="ENOLASE"/>
    <property type="match status" value="1"/>
</dbReference>
<dbReference type="PANTHER" id="PTHR11902:SF1">
    <property type="entry name" value="ENOLASE"/>
    <property type="match status" value="1"/>
</dbReference>
<dbReference type="Pfam" id="PF00113">
    <property type="entry name" value="Enolase_C"/>
    <property type="match status" value="1"/>
</dbReference>
<dbReference type="Pfam" id="PF03952">
    <property type="entry name" value="Enolase_N"/>
    <property type="match status" value="1"/>
</dbReference>
<dbReference type="PIRSF" id="PIRSF001400">
    <property type="entry name" value="Enolase"/>
    <property type="match status" value="1"/>
</dbReference>
<dbReference type="PRINTS" id="PR00148">
    <property type="entry name" value="ENOLASE"/>
</dbReference>
<dbReference type="SFLD" id="SFLDF00002">
    <property type="entry name" value="enolase"/>
    <property type="match status" value="1"/>
</dbReference>
<dbReference type="SFLD" id="SFLDG00178">
    <property type="entry name" value="enolase"/>
    <property type="match status" value="1"/>
</dbReference>
<dbReference type="SMART" id="SM01192">
    <property type="entry name" value="Enolase_C"/>
    <property type="match status" value="1"/>
</dbReference>
<dbReference type="SMART" id="SM01193">
    <property type="entry name" value="Enolase_N"/>
    <property type="match status" value="1"/>
</dbReference>
<dbReference type="SUPFAM" id="SSF51604">
    <property type="entry name" value="Enolase C-terminal domain-like"/>
    <property type="match status" value="1"/>
</dbReference>
<dbReference type="SUPFAM" id="SSF54826">
    <property type="entry name" value="Enolase N-terminal domain-like"/>
    <property type="match status" value="1"/>
</dbReference>
<dbReference type="PROSITE" id="PS00164">
    <property type="entry name" value="ENOLASE"/>
    <property type="match status" value="1"/>
</dbReference>
<feature type="chain" id="PRO_1000189958" description="Enolase">
    <location>
        <begin position="1"/>
        <end position="429"/>
    </location>
</feature>
<feature type="active site" description="Proton donor" evidence="1">
    <location>
        <position position="204"/>
    </location>
</feature>
<feature type="active site" description="Proton acceptor" evidence="1">
    <location>
        <position position="335"/>
    </location>
</feature>
<feature type="binding site" evidence="1">
    <location>
        <position position="162"/>
    </location>
    <ligand>
        <name>(2R)-2-phosphoglycerate</name>
        <dbReference type="ChEBI" id="CHEBI:58289"/>
    </ligand>
</feature>
<feature type="binding site" evidence="1">
    <location>
        <position position="241"/>
    </location>
    <ligand>
        <name>Mg(2+)</name>
        <dbReference type="ChEBI" id="CHEBI:18420"/>
    </ligand>
</feature>
<feature type="binding site" evidence="1">
    <location>
        <position position="283"/>
    </location>
    <ligand>
        <name>Mg(2+)</name>
        <dbReference type="ChEBI" id="CHEBI:18420"/>
    </ligand>
</feature>
<feature type="binding site" evidence="1">
    <location>
        <position position="310"/>
    </location>
    <ligand>
        <name>Mg(2+)</name>
        <dbReference type="ChEBI" id="CHEBI:18420"/>
    </ligand>
</feature>
<feature type="binding site" evidence="1">
    <location>
        <position position="335"/>
    </location>
    <ligand>
        <name>(2R)-2-phosphoglycerate</name>
        <dbReference type="ChEBI" id="CHEBI:58289"/>
    </ligand>
</feature>
<feature type="binding site" evidence="1">
    <location>
        <position position="364"/>
    </location>
    <ligand>
        <name>(2R)-2-phosphoglycerate</name>
        <dbReference type="ChEBI" id="CHEBI:58289"/>
    </ligand>
</feature>
<feature type="binding site" evidence="1">
    <location>
        <position position="365"/>
    </location>
    <ligand>
        <name>(2R)-2-phosphoglycerate</name>
        <dbReference type="ChEBI" id="CHEBI:58289"/>
    </ligand>
</feature>
<feature type="binding site" evidence="1">
    <location>
        <position position="386"/>
    </location>
    <ligand>
        <name>(2R)-2-phosphoglycerate</name>
        <dbReference type="ChEBI" id="CHEBI:58289"/>
    </ligand>
</feature>
<accession>C1AM14</accession>
<evidence type="ECO:0000255" key="1">
    <source>
        <dbReference type="HAMAP-Rule" id="MF_00318"/>
    </source>
</evidence>
<name>ENO_MYCBT</name>
<reference key="1">
    <citation type="journal article" date="2009" name="Vaccine">
        <title>Whole genome sequence analysis of Mycobacterium bovis bacillus Calmette-Guerin (BCG) Tokyo 172: a comparative study of BCG vaccine substrains.</title>
        <authorList>
            <person name="Seki M."/>
            <person name="Honda I."/>
            <person name="Fujita I."/>
            <person name="Yano I."/>
            <person name="Yamamoto S."/>
            <person name="Koyama A."/>
        </authorList>
    </citation>
    <scope>NUCLEOTIDE SEQUENCE [LARGE SCALE GENOMIC DNA]</scope>
    <source>
        <strain>BCG / Tokyo 172 / ATCC 35737 / TMC 1019</strain>
    </source>
</reference>
<keyword id="KW-0963">Cytoplasm</keyword>
<keyword id="KW-0324">Glycolysis</keyword>
<keyword id="KW-0456">Lyase</keyword>
<keyword id="KW-0460">Magnesium</keyword>
<keyword id="KW-0479">Metal-binding</keyword>
<keyword id="KW-0964">Secreted</keyword>
<sequence>MPIIEQVGAREILDSRGNPTVEVEVALIDGTFARAAVPSGASTGEHEAVELRDGGDRYGGKGVQKAVQAVLDEIGPAVIGLNADDQRLVDQALVDLDGTPDKSRLGGNAILGVSLAVAKAAADSAELPLFRYVGGPNAHILPVPMMNILNGGAHADTAVDIQEFMVAPIGAPSFVEALRWGAEVYHALKSVLKKEGLSTGLGDEGGFAPDVAGTTAALDLISRAIESAGLRPGADVALALDAAATEFFTDGTGYVFEGTTRTADQMTEFYAGLLGAYPLVSIEDPLSEDDWDGWAALTASIGDRVQIVGDDIFVTNPERLEEGIERGVANALLVKVNQIGTLTETLDAVTLAHHGGYRTMISHRSGETEDTMIADLAVAIGSGQIKTGAPARSERVAKYNQLLRIEEALGDAARYAGDLAFPRFACETK</sequence>
<protein>
    <recommendedName>
        <fullName evidence="1">Enolase</fullName>
        <ecNumber evidence="1">4.2.1.11</ecNumber>
    </recommendedName>
    <alternativeName>
        <fullName evidence="1">2-phospho-D-glycerate hydro-lyase</fullName>
    </alternativeName>
    <alternativeName>
        <fullName evidence="1">2-phosphoglycerate dehydratase</fullName>
    </alternativeName>
</protein>
<organism>
    <name type="scientific">Mycobacterium bovis (strain BCG / Tokyo 172 / ATCC 35737 / TMC 1019)</name>
    <dbReference type="NCBI Taxonomy" id="561275"/>
    <lineage>
        <taxon>Bacteria</taxon>
        <taxon>Bacillati</taxon>
        <taxon>Actinomycetota</taxon>
        <taxon>Actinomycetes</taxon>
        <taxon>Mycobacteriales</taxon>
        <taxon>Mycobacteriaceae</taxon>
        <taxon>Mycobacterium</taxon>
        <taxon>Mycobacterium tuberculosis complex</taxon>
    </lineage>
</organism>
<gene>
    <name evidence="1" type="primary">eno</name>
    <name type="ordered locus">JTY_1052</name>
</gene>
<proteinExistence type="inferred from homology"/>
<comment type="function">
    <text evidence="1">Catalyzes the reversible conversion of 2-phosphoglycerate (2-PG) into phosphoenolpyruvate (PEP). It is essential for the degradation of carbohydrates via glycolysis.</text>
</comment>
<comment type="catalytic activity">
    <reaction evidence="1">
        <text>(2R)-2-phosphoglycerate = phosphoenolpyruvate + H2O</text>
        <dbReference type="Rhea" id="RHEA:10164"/>
        <dbReference type="ChEBI" id="CHEBI:15377"/>
        <dbReference type="ChEBI" id="CHEBI:58289"/>
        <dbReference type="ChEBI" id="CHEBI:58702"/>
        <dbReference type="EC" id="4.2.1.11"/>
    </reaction>
</comment>
<comment type="cofactor">
    <cofactor evidence="1">
        <name>Mg(2+)</name>
        <dbReference type="ChEBI" id="CHEBI:18420"/>
    </cofactor>
    <text evidence="1">Binds a second Mg(2+) ion via substrate during catalysis.</text>
</comment>
<comment type="pathway">
    <text evidence="1">Carbohydrate degradation; glycolysis; pyruvate from D-glyceraldehyde 3-phosphate: step 4/5.</text>
</comment>
<comment type="subcellular location">
    <subcellularLocation>
        <location evidence="1">Cytoplasm</location>
    </subcellularLocation>
    <subcellularLocation>
        <location evidence="1">Secreted</location>
    </subcellularLocation>
    <subcellularLocation>
        <location evidence="1">Cell surface</location>
    </subcellularLocation>
    <text evidence="1">Fractions of enolase are present in both the cytoplasm and on the cell surface.</text>
</comment>
<comment type="similarity">
    <text evidence="1">Belongs to the enolase family.</text>
</comment>